<organism>
    <name type="scientific">Burkholderia pseudomallei (strain 1106a)</name>
    <dbReference type="NCBI Taxonomy" id="357348"/>
    <lineage>
        <taxon>Bacteria</taxon>
        <taxon>Pseudomonadati</taxon>
        <taxon>Pseudomonadota</taxon>
        <taxon>Betaproteobacteria</taxon>
        <taxon>Burkholderiales</taxon>
        <taxon>Burkholderiaceae</taxon>
        <taxon>Burkholderia</taxon>
        <taxon>pseudomallei group</taxon>
    </lineage>
</organism>
<evidence type="ECO:0000255" key="1">
    <source>
        <dbReference type="HAMAP-Rule" id="MF_00046"/>
    </source>
</evidence>
<name>MURC_BURP0</name>
<proteinExistence type="inferred from homology"/>
<feature type="chain" id="PRO_1000004323" description="UDP-N-acetylmuramate--L-alanine ligase">
    <location>
        <begin position="1"/>
        <end position="465"/>
    </location>
</feature>
<feature type="binding site" evidence="1">
    <location>
        <begin position="112"/>
        <end position="118"/>
    </location>
    <ligand>
        <name>ATP</name>
        <dbReference type="ChEBI" id="CHEBI:30616"/>
    </ligand>
</feature>
<protein>
    <recommendedName>
        <fullName evidence="1">UDP-N-acetylmuramate--L-alanine ligase</fullName>
        <ecNumber evidence="1">6.3.2.8</ecNumber>
    </recommendedName>
    <alternativeName>
        <fullName evidence="1">UDP-N-acetylmuramoyl-L-alanine synthetase</fullName>
    </alternativeName>
</protein>
<gene>
    <name evidence="1" type="primary">murC</name>
    <name type="ordered locus">BURPS1106A_3549</name>
</gene>
<comment type="function">
    <text evidence="1">Cell wall formation.</text>
</comment>
<comment type="catalytic activity">
    <reaction evidence="1">
        <text>UDP-N-acetyl-alpha-D-muramate + L-alanine + ATP = UDP-N-acetyl-alpha-D-muramoyl-L-alanine + ADP + phosphate + H(+)</text>
        <dbReference type="Rhea" id="RHEA:23372"/>
        <dbReference type="ChEBI" id="CHEBI:15378"/>
        <dbReference type="ChEBI" id="CHEBI:30616"/>
        <dbReference type="ChEBI" id="CHEBI:43474"/>
        <dbReference type="ChEBI" id="CHEBI:57972"/>
        <dbReference type="ChEBI" id="CHEBI:70757"/>
        <dbReference type="ChEBI" id="CHEBI:83898"/>
        <dbReference type="ChEBI" id="CHEBI:456216"/>
        <dbReference type="EC" id="6.3.2.8"/>
    </reaction>
</comment>
<comment type="pathway">
    <text evidence="1">Cell wall biogenesis; peptidoglycan biosynthesis.</text>
</comment>
<comment type="subcellular location">
    <subcellularLocation>
        <location evidence="1">Cytoplasm</location>
    </subcellularLocation>
</comment>
<comment type="similarity">
    <text evidence="1">Belongs to the MurCDEF family.</text>
</comment>
<accession>A3NZL4</accession>
<sequence length="465" mass="49026">MKHIVKHIHFVGIGGAGMSGIAEVLVNLGYQVSGSDLARNAVTERLEALGARVSIGHDAANIEGANAVVVSTAVRSDNPEVLAARRLRVPIVPRAVMLAELMRLKQGIAIAGTHGKTTTTSLVASVLAAGGLDPTFVIGGRLTSAGANARLGTGDFIVAEADESDASFLNLYPVIEVITNIDADHMDTYGHDFARLKQAFIEFTQRLPFYGSAVVCIDDANVRQIVPLISKPVVRYGFAADAQVRAENVEARDGRMHFTVRREGREPLPVVLNLPGLHNVQNALAAIAIATDLDVADAAIQQALAEFNGVGRRFQRYGEIAAAGGGAYTLIDDYGHHPVEMAATIAAARGAFPGRRLVLAFQPHRYTRTRDCFDDFVNVLSTVDALVLTEVYAAGEAPISTANGDALSRALRAAGKVEPVFVATVDEVPDALAKLARDGDVVITMGAGSIGGVPGKLAQDTQQKG</sequence>
<keyword id="KW-0067">ATP-binding</keyword>
<keyword id="KW-0131">Cell cycle</keyword>
<keyword id="KW-0132">Cell division</keyword>
<keyword id="KW-0133">Cell shape</keyword>
<keyword id="KW-0961">Cell wall biogenesis/degradation</keyword>
<keyword id="KW-0963">Cytoplasm</keyword>
<keyword id="KW-0436">Ligase</keyword>
<keyword id="KW-0547">Nucleotide-binding</keyword>
<keyword id="KW-0573">Peptidoglycan synthesis</keyword>
<reference key="1">
    <citation type="journal article" date="2010" name="Genome Biol. Evol.">
        <title>Continuing evolution of Burkholderia mallei through genome reduction and large-scale rearrangements.</title>
        <authorList>
            <person name="Losada L."/>
            <person name="Ronning C.M."/>
            <person name="DeShazer D."/>
            <person name="Woods D."/>
            <person name="Fedorova N."/>
            <person name="Kim H.S."/>
            <person name="Shabalina S.A."/>
            <person name="Pearson T.R."/>
            <person name="Brinkac L."/>
            <person name="Tan P."/>
            <person name="Nandi T."/>
            <person name="Crabtree J."/>
            <person name="Badger J."/>
            <person name="Beckstrom-Sternberg S."/>
            <person name="Saqib M."/>
            <person name="Schutzer S.E."/>
            <person name="Keim P."/>
            <person name="Nierman W.C."/>
        </authorList>
    </citation>
    <scope>NUCLEOTIDE SEQUENCE [LARGE SCALE GENOMIC DNA]</scope>
    <source>
        <strain>1106a</strain>
    </source>
</reference>
<dbReference type="EC" id="6.3.2.8" evidence="1"/>
<dbReference type="EMBL" id="CP000572">
    <property type="protein sequence ID" value="ABN92156.1"/>
    <property type="molecule type" value="Genomic_DNA"/>
</dbReference>
<dbReference type="RefSeq" id="WP_004522018.1">
    <property type="nucleotide sequence ID" value="NC_009076.1"/>
</dbReference>
<dbReference type="SMR" id="A3NZL4"/>
<dbReference type="GeneID" id="93061626"/>
<dbReference type="KEGG" id="bpl:BURPS1106A_3549"/>
<dbReference type="HOGENOM" id="CLU_028104_2_2_4"/>
<dbReference type="UniPathway" id="UPA00219"/>
<dbReference type="Proteomes" id="UP000006738">
    <property type="component" value="Chromosome I"/>
</dbReference>
<dbReference type="GO" id="GO:0005737">
    <property type="term" value="C:cytoplasm"/>
    <property type="evidence" value="ECO:0007669"/>
    <property type="project" value="UniProtKB-SubCell"/>
</dbReference>
<dbReference type="GO" id="GO:0005524">
    <property type="term" value="F:ATP binding"/>
    <property type="evidence" value="ECO:0007669"/>
    <property type="project" value="UniProtKB-UniRule"/>
</dbReference>
<dbReference type="GO" id="GO:0008763">
    <property type="term" value="F:UDP-N-acetylmuramate-L-alanine ligase activity"/>
    <property type="evidence" value="ECO:0007669"/>
    <property type="project" value="UniProtKB-UniRule"/>
</dbReference>
<dbReference type="GO" id="GO:0051301">
    <property type="term" value="P:cell division"/>
    <property type="evidence" value="ECO:0007669"/>
    <property type="project" value="UniProtKB-KW"/>
</dbReference>
<dbReference type="GO" id="GO:0071555">
    <property type="term" value="P:cell wall organization"/>
    <property type="evidence" value="ECO:0007669"/>
    <property type="project" value="UniProtKB-KW"/>
</dbReference>
<dbReference type="GO" id="GO:0009252">
    <property type="term" value="P:peptidoglycan biosynthetic process"/>
    <property type="evidence" value="ECO:0007669"/>
    <property type="project" value="UniProtKB-UniRule"/>
</dbReference>
<dbReference type="GO" id="GO:0008360">
    <property type="term" value="P:regulation of cell shape"/>
    <property type="evidence" value="ECO:0007669"/>
    <property type="project" value="UniProtKB-KW"/>
</dbReference>
<dbReference type="FunFam" id="3.40.1190.10:FF:000001">
    <property type="entry name" value="UDP-N-acetylmuramate--L-alanine ligase"/>
    <property type="match status" value="1"/>
</dbReference>
<dbReference type="Gene3D" id="3.90.190.20">
    <property type="entry name" value="Mur ligase, C-terminal domain"/>
    <property type="match status" value="1"/>
</dbReference>
<dbReference type="Gene3D" id="3.40.1190.10">
    <property type="entry name" value="Mur-like, catalytic domain"/>
    <property type="match status" value="1"/>
</dbReference>
<dbReference type="Gene3D" id="3.40.50.720">
    <property type="entry name" value="NAD(P)-binding Rossmann-like Domain"/>
    <property type="match status" value="1"/>
</dbReference>
<dbReference type="HAMAP" id="MF_00046">
    <property type="entry name" value="MurC"/>
    <property type="match status" value="1"/>
</dbReference>
<dbReference type="InterPro" id="IPR036565">
    <property type="entry name" value="Mur-like_cat_sf"/>
</dbReference>
<dbReference type="InterPro" id="IPR004101">
    <property type="entry name" value="Mur_ligase_C"/>
</dbReference>
<dbReference type="InterPro" id="IPR036615">
    <property type="entry name" value="Mur_ligase_C_dom_sf"/>
</dbReference>
<dbReference type="InterPro" id="IPR013221">
    <property type="entry name" value="Mur_ligase_cen"/>
</dbReference>
<dbReference type="InterPro" id="IPR000713">
    <property type="entry name" value="Mur_ligase_N"/>
</dbReference>
<dbReference type="InterPro" id="IPR050061">
    <property type="entry name" value="MurCDEF_pg_biosynth"/>
</dbReference>
<dbReference type="InterPro" id="IPR005758">
    <property type="entry name" value="UDP-N-AcMur_Ala_ligase_MurC"/>
</dbReference>
<dbReference type="NCBIfam" id="TIGR01082">
    <property type="entry name" value="murC"/>
    <property type="match status" value="1"/>
</dbReference>
<dbReference type="PANTHER" id="PTHR43445:SF3">
    <property type="entry name" value="UDP-N-ACETYLMURAMATE--L-ALANINE LIGASE"/>
    <property type="match status" value="1"/>
</dbReference>
<dbReference type="PANTHER" id="PTHR43445">
    <property type="entry name" value="UDP-N-ACETYLMURAMATE--L-ALANINE LIGASE-RELATED"/>
    <property type="match status" value="1"/>
</dbReference>
<dbReference type="Pfam" id="PF01225">
    <property type="entry name" value="Mur_ligase"/>
    <property type="match status" value="1"/>
</dbReference>
<dbReference type="Pfam" id="PF02875">
    <property type="entry name" value="Mur_ligase_C"/>
    <property type="match status" value="1"/>
</dbReference>
<dbReference type="Pfam" id="PF08245">
    <property type="entry name" value="Mur_ligase_M"/>
    <property type="match status" value="1"/>
</dbReference>
<dbReference type="SUPFAM" id="SSF51984">
    <property type="entry name" value="MurCD N-terminal domain"/>
    <property type="match status" value="1"/>
</dbReference>
<dbReference type="SUPFAM" id="SSF53623">
    <property type="entry name" value="MurD-like peptide ligases, catalytic domain"/>
    <property type="match status" value="1"/>
</dbReference>
<dbReference type="SUPFAM" id="SSF53244">
    <property type="entry name" value="MurD-like peptide ligases, peptide-binding domain"/>
    <property type="match status" value="1"/>
</dbReference>